<gene>
    <name evidence="2" type="primary">gshB</name>
    <name type="ordered locus">STM3095</name>
</gene>
<protein>
    <recommendedName>
        <fullName evidence="2">Glutathione synthetase</fullName>
        <ecNumber evidence="2">6.3.2.3</ecNumber>
    </recommendedName>
    <alternativeName>
        <fullName evidence="2">GSH synthetase</fullName>
        <shortName evidence="2">GSH-S</shortName>
        <shortName evidence="2">GSHase</shortName>
    </alternativeName>
    <alternativeName>
        <fullName evidence="2">Glutathione synthase</fullName>
    </alternativeName>
</protein>
<feature type="chain" id="PRO_0000197484" description="Glutathione synthetase">
    <location>
        <begin position="1"/>
        <end position="315"/>
    </location>
</feature>
<feature type="domain" description="ATP-grasp" evidence="2">
    <location>
        <begin position="125"/>
        <end position="310"/>
    </location>
</feature>
<feature type="binding site" evidence="2">
    <location>
        <begin position="151"/>
        <end position="207"/>
    </location>
    <ligand>
        <name>ATP</name>
        <dbReference type="ChEBI" id="CHEBI:30616"/>
    </ligand>
</feature>
<feature type="binding site" evidence="2">
    <location>
        <position position="281"/>
    </location>
    <ligand>
        <name>Mg(2+)</name>
        <dbReference type="ChEBI" id="CHEBI:18420"/>
    </ligand>
</feature>
<feature type="binding site" evidence="2">
    <location>
        <position position="283"/>
    </location>
    <ligand>
        <name>Mg(2+)</name>
        <dbReference type="ChEBI" id="CHEBI:18420"/>
    </ligand>
</feature>
<keyword id="KW-0067">ATP-binding</keyword>
<keyword id="KW-0317">Glutathione biosynthesis</keyword>
<keyword id="KW-0436">Ligase</keyword>
<keyword id="KW-0460">Magnesium</keyword>
<keyword id="KW-0464">Manganese</keyword>
<keyword id="KW-0479">Metal-binding</keyword>
<keyword id="KW-0547">Nucleotide-binding</keyword>
<keyword id="KW-1185">Reference proteome</keyword>
<comment type="catalytic activity">
    <reaction evidence="2">
        <text>gamma-L-glutamyl-L-cysteine + glycine + ATP = glutathione + ADP + phosphate + H(+)</text>
        <dbReference type="Rhea" id="RHEA:13557"/>
        <dbReference type="ChEBI" id="CHEBI:15378"/>
        <dbReference type="ChEBI" id="CHEBI:30616"/>
        <dbReference type="ChEBI" id="CHEBI:43474"/>
        <dbReference type="ChEBI" id="CHEBI:57305"/>
        <dbReference type="ChEBI" id="CHEBI:57925"/>
        <dbReference type="ChEBI" id="CHEBI:58173"/>
        <dbReference type="ChEBI" id="CHEBI:456216"/>
        <dbReference type="EC" id="6.3.2.3"/>
    </reaction>
</comment>
<comment type="cofactor">
    <cofactor evidence="1">
        <name>Mg(2+)</name>
        <dbReference type="ChEBI" id="CHEBI:18420"/>
    </cofactor>
    <cofactor evidence="1">
        <name>Mn(2+)</name>
        <dbReference type="ChEBI" id="CHEBI:29035"/>
    </cofactor>
    <text evidence="1">Binds 1 Mg(2+) or Mn(2+) ion per subunit.</text>
</comment>
<comment type="pathway">
    <text evidence="2">Sulfur metabolism; glutathione biosynthesis; glutathione from L-cysteine and L-glutamate: step 2/2.</text>
</comment>
<comment type="similarity">
    <text evidence="2">Belongs to the prokaryotic GSH synthase family.</text>
</comment>
<accession>P58580</accession>
<sequence length="315" mass="35433">MIKLGIVMDPIAHINIKKDTSFAMLLEAQRRGYELHYMEMADLYLINGEARARTRTLSVEQNYDKWYEFGSEQEIKLADLDVILMRKDPPFDTEFIYATYILERAEEEGTLIVNKPQSLRDCNEKLYTAWFADLTPETLVTRNKAQLKAFWEKHGDIIMKPLDGMGGASIFRVKEGDPNIGVIAETLTELGNRYCMAQNYLPAIKDGDKRVLVVDGEPVPYCLARIPQGGETRGNLAAGGRGEPRPLSESDWEIARRVGPTLKAKGLIFVGLDIIGDRLTEINVTSPTCVREIEAEYPISITGMLMDAIEARLAK</sequence>
<dbReference type="EC" id="6.3.2.3" evidence="2"/>
<dbReference type="EMBL" id="AE006468">
    <property type="protein sequence ID" value="AAL21970.1"/>
    <property type="molecule type" value="Genomic_DNA"/>
</dbReference>
<dbReference type="RefSeq" id="NP_462011.1">
    <property type="nucleotide sequence ID" value="NC_003197.2"/>
</dbReference>
<dbReference type="RefSeq" id="WP_000593248.1">
    <property type="nucleotide sequence ID" value="NC_003197.2"/>
</dbReference>
<dbReference type="SMR" id="P58580"/>
<dbReference type="STRING" id="99287.STM3095"/>
<dbReference type="PaxDb" id="99287-STM3095"/>
<dbReference type="GeneID" id="1254618"/>
<dbReference type="KEGG" id="stm:STM3095"/>
<dbReference type="PATRIC" id="fig|99287.12.peg.3280"/>
<dbReference type="HOGENOM" id="CLU_068239_0_0_6"/>
<dbReference type="OMA" id="IWMRKDP"/>
<dbReference type="PhylomeDB" id="P58580"/>
<dbReference type="BioCyc" id="SENT99287:STM3095-MONOMER"/>
<dbReference type="UniPathway" id="UPA00142">
    <property type="reaction ID" value="UER00210"/>
</dbReference>
<dbReference type="Proteomes" id="UP000001014">
    <property type="component" value="Chromosome"/>
</dbReference>
<dbReference type="GO" id="GO:0005737">
    <property type="term" value="C:cytoplasm"/>
    <property type="evidence" value="ECO:0000318"/>
    <property type="project" value="GO_Central"/>
</dbReference>
<dbReference type="GO" id="GO:0005524">
    <property type="term" value="F:ATP binding"/>
    <property type="evidence" value="ECO:0007669"/>
    <property type="project" value="UniProtKB-UniRule"/>
</dbReference>
<dbReference type="GO" id="GO:0004363">
    <property type="term" value="F:glutathione synthase activity"/>
    <property type="evidence" value="ECO:0000318"/>
    <property type="project" value="GO_Central"/>
</dbReference>
<dbReference type="GO" id="GO:0046872">
    <property type="term" value="F:metal ion binding"/>
    <property type="evidence" value="ECO:0007669"/>
    <property type="project" value="UniProtKB-KW"/>
</dbReference>
<dbReference type="FunFam" id="3.30.1490.20:FF:000009">
    <property type="entry name" value="Glutathione synthetase"/>
    <property type="match status" value="1"/>
</dbReference>
<dbReference type="FunFam" id="3.30.470.20:FF:000010">
    <property type="entry name" value="Glutathione synthetase"/>
    <property type="match status" value="1"/>
</dbReference>
<dbReference type="FunFam" id="3.40.50.20:FF:000009">
    <property type="entry name" value="Glutathione synthetase"/>
    <property type="match status" value="1"/>
</dbReference>
<dbReference type="Gene3D" id="3.40.50.20">
    <property type="match status" value="1"/>
</dbReference>
<dbReference type="Gene3D" id="3.30.1490.20">
    <property type="entry name" value="ATP-grasp fold, A domain"/>
    <property type="match status" value="1"/>
</dbReference>
<dbReference type="Gene3D" id="3.30.470.20">
    <property type="entry name" value="ATP-grasp fold, B domain"/>
    <property type="match status" value="1"/>
</dbReference>
<dbReference type="HAMAP" id="MF_00162">
    <property type="entry name" value="GSH_S"/>
    <property type="match status" value="1"/>
</dbReference>
<dbReference type="InterPro" id="IPR011761">
    <property type="entry name" value="ATP-grasp"/>
</dbReference>
<dbReference type="InterPro" id="IPR013815">
    <property type="entry name" value="ATP_grasp_subdomain_1"/>
</dbReference>
<dbReference type="InterPro" id="IPR006284">
    <property type="entry name" value="Glut_synth_pro"/>
</dbReference>
<dbReference type="InterPro" id="IPR004218">
    <property type="entry name" value="GSHS_ATP-bd"/>
</dbReference>
<dbReference type="InterPro" id="IPR004215">
    <property type="entry name" value="GSHS_N"/>
</dbReference>
<dbReference type="InterPro" id="IPR016185">
    <property type="entry name" value="PreATP-grasp_dom_sf"/>
</dbReference>
<dbReference type="NCBIfam" id="TIGR01380">
    <property type="entry name" value="glut_syn"/>
    <property type="match status" value="1"/>
</dbReference>
<dbReference type="NCBIfam" id="NF003573">
    <property type="entry name" value="PRK05246.1"/>
    <property type="match status" value="1"/>
</dbReference>
<dbReference type="PANTHER" id="PTHR21621:SF4">
    <property type="entry name" value="GLUTATHIONE SYNTHETASE"/>
    <property type="match status" value="1"/>
</dbReference>
<dbReference type="PANTHER" id="PTHR21621">
    <property type="entry name" value="RIBOSOMAL PROTEIN S6 MODIFICATION PROTEIN"/>
    <property type="match status" value="1"/>
</dbReference>
<dbReference type="Pfam" id="PF02955">
    <property type="entry name" value="GSH-S_ATP"/>
    <property type="match status" value="1"/>
</dbReference>
<dbReference type="Pfam" id="PF02951">
    <property type="entry name" value="GSH-S_N"/>
    <property type="match status" value="1"/>
</dbReference>
<dbReference type="SUPFAM" id="SSF56059">
    <property type="entry name" value="Glutathione synthetase ATP-binding domain-like"/>
    <property type="match status" value="1"/>
</dbReference>
<dbReference type="SUPFAM" id="SSF52440">
    <property type="entry name" value="PreATP-grasp domain"/>
    <property type="match status" value="1"/>
</dbReference>
<dbReference type="PROSITE" id="PS50975">
    <property type="entry name" value="ATP_GRASP"/>
    <property type="match status" value="1"/>
</dbReference>
<reference key="1">
    <citation type="journal article" date="2001" name="Nature">
        <title>Complete genome sequence of Salmonella enterica serovar Typhimurium LT2.</title>
        <authorList>
            <person name="McClelland M."/>
            <person name="Sanderson K.E."/>
            <person name="Spieth J."/>
            <person name="Clifton S.W."/>
            <person name="Latreille P."/>
            <person name="Courtney L."/>
            <person name="Porwollik S."/>
            <person name="Ali J."/>
            <person name="Dante M."/>
            <person name="Du F."/>
            <person name="Hou S."/>
            <person name="Layman D."/>
            <person name="Leonard S."/>
            <person name="Nguyen C."/>
            <person name="Scott K."/>
            <person name="Holmes A."/>
            <person name="Grewal N."/>
            <person name="Mulvaney E."/>
            <person name="Ryan E."/>
            <person name="Sun H."/>
            <person name="Florea L."/>
            <person name="Miller W."/>
            <person name="Stoneking T."/>
            <person name="Nhan M."/>
            <person name="Waterston R."/>
            <person name="Wilson R.K."/>
        </authorList>
    </citation>
    <scope>NUCLEOTIDE SEQUENCE [LARGE SCALE GENOMIC DNA]</scope>
    <source>
        <strain>LT2 / SGSC1412 / ATCC 700720</strain>
    </source>
</reference>
<evidence type="ECO:0000250" key="1"/>
<evidence type="ECO:0000255" key="2">
    <source>
        <dbReference type="HAMAP-Rule" id="MF_00162"/>
    </source>
</evidence>
<name>GSHB_SALTY</name>
<organism>
    <name type="scientific">Salmonella typhimurium (strain LT2 / SGSC1412 / ATCC 700720)</name>
    <dbReference type="NCBI Taxonomy" id="99287"/>
    <lineage>
        <taxon>Bacteria</taxon>
        <taxon>Pseudomonadati</taxon>
        <taxon>Pseudomonadota</taxon>
        <taxon>Gammaproteobacteria</taxon>
        <taxon>Enterobacterales</taxon>
        <taxon>Enterobacteriaceae</taxon>
        <taxon>Salmonella</taxon>
    </lineage>
</organism>
<proteinExistence type="inferred from homology"/>